<organism>
    <name type="scientific">Brachypelma smithi</name>
    <name type="common">Mexican red knee tarantula</name>
    <name type="synonym">Eurypelma smithi</name>
    <dbReference type="NCBI Taxonomy" id="54074"/>
    <lineage>
        <taxon>Eukaryota</taxon>
        <taxon>Metazoa</taxon>
        <taxon>Ecdysozoa</taxon>
        <taxon>Arthropoda</taxon>
        <taxon>Chelicerata</taxon>
        <taxon>Arachnida</taxon>
        <taxon>Araneae</taxon>
        <taxon>Mygalomorphae</taxon>
        <taxon>Theraphosidae</taxon>
        <taxon>Brachypelma</taxon>
    </lineage>
</organism>
<reference key="1">
    <citation type="journal article" date="1994" name="Toxicon">
        <title>Primary structures of two proteins from the venom of the Mexican red knee tarantula (Brachypelma smithii).</title>
        <authorList>
            <person name="Kaiser I.I."/>
            <person name="Griffin P.R."/>
            <person name="Aird S.D."/>
            <person name="Hudiburg S."/>
            <person name="Shabanowitz J."/>
            <person name="Francis B."/>
            <person name="John T.R."/>
            <person name="Hunt D.F."/>
            <person name="Odell G.V."/>
        </authorList>
    </citation>
    <scope>PROTEIN SEQUENCE</scope>
    <scope>MASS SPECTROMETRY</scope>
    <scope>DISULFIDE BONDS</scope>
    <scope>SUBCELLULAR LOCATION</scope>
    <source>
        <tissue>Venom</tissue>
    </source>
</reference>
<reference key="2">
    <citation type="journal article" date="2002" name="Protein Sci.">
        <title>The structure of spider toxin huwentoxin-II with unique disulfide linkage: evidence for structural evolution.</title>
        <authorList>
            <person name="Shu Q."/>
            <person name="Lu S.Y."/>
            <person name="Gu X.-C."/>
            <person name="Liang S.-P."/>
        </authorList>
    </citation>
    <scope>ALTERNATIVE DISULFIDE BONDS TOPOLOGY</scope>
</reference>
<name>TXP1A_BRASM</name>
<evidence type="ECO:0000250" key="1">
    <source>
        <dbReference type="UniProtKB" id="P0DL63"/>
    </source>
</evidence>
<evidence type="ECO:0000250" key="2">
    <source>
        <dbReference type="UniProtKB" id="P85497"/>
    </source>
</evidence>
<evidence type="ECO:0000269" key="3">
    <source>
    </source>
</evidence>
<evidence type="ECO:0000303" key="4">
    <source>
    </source>
</evidence>
<evidence type="ECO:0000305" key="5"/>
<evidence type="ECO:0000305" key="6">
    <source>
    </source>
</evidence>
<evidence type="ECO:0000305" key="7">
    <source>
    </source>
</evidence>
<sequence length="39" mass="4405">IFECVFSCDIEKEGKPCKPKGEKKCSGGWKCKIKLCLKI</sequence>
<feature type="peptide" id="PRO_0000044982" description="Omega-theraphotoxin-Bs1a" evidence="3">
    <location>
        <begin position="1"/>
        <end position="39"/>
    </location>
</feature>
<feature type="disulfide bond" evidence="3">
    <location>
        <begin position="4"/>
        <end position="25"/>
    </location>
</feature>
<feature type="disulfide bond" evidence="3">
    <location>
        <begin position="8"/>
        <end position="31"/>
    </location>
</feature>
<feature type="disulfide bond" evidence="3">
    <location>
        <begin position="17"/>
        <end position="36"/>
    </location>
</feature>
<comment type="function">
    <text evidence="1 2">Inhibits voltage-gated calcium channels (Cav) in rat cerebellar granule cells (By similarity). Has insecticidal activity (By similarity).</text>
</comment>
<comment type="subcellular location">
    <subcellularLocation>
        <location evidence="3">Secreted</location>
    </subcellularLocation>
</comment>
<comment type="tissue specificity">
    <text evidence="7">Expressed by the venom gland.</text>
</comment>
<comment type="mass spectrometry" mass="4400.4" method="Electrospray" evidence="3"/>
<comment type="miscellaneous">
    <text evidence="5">The primary structure of the mature peptide is identical to that of Eurypelma spider toxin 2 from Aphonopelma californicum (AC P61510).</text>
</comment>
<comment type="similarity">
    <text evidence="5">Belongs to the neurotoxin 12 (Hwtx-2) family. 06 (TXP1) subfamily.</text>
</comment>
<comment type="caution">
    <text evidence="6">It is reported in PubMed:11790834 that disulfide bonds may be in positions 4-17, 8-31 and 25-36.</text>
</comment>
<proteinExistence type="evidence at protein level"/>
<protein>
    <recommendedName>
        <fullName evidence="5">Omega-theraphotoxin-Bs1a</fullName>
        <shortName evidence="5">Omega-TRTX-Bs1a</shortName>
    </recommendedName>
    <alternativeName>
        <fullName>BsTX1a</fullName>
    </alternativeName>
    <alternativeName>
        <fullName evidence="4">Venom protein 1</fullName>
    </alternativeName>
</protein>
<dbReference type="SMR" id="P0DL80"/>
<dbReference type="GO" id="GO:0005576">
    <property type="term" value="C:extracellular region"/>
    <property type="evidence" value="ECO:0007669"/>
    <property type="project" value="UniProtKB-SubCell"/>
</dbReference>
<dbReference type="GO" id="GO:0090729">
    <property type="term" value="F:toxin activity"/>
    <property type="evidence" value="ECO:0007669"/>
    <property type="project" value="UniProtKB-KW"/>
</dbReference>
<dbReference type="InterPro" id="IPR012625">
    <property type="entry name" value="Hwtx-2-like"/>
</dbReference>
<dbReference type="Pfam" id="PF08089">
    <property type="entry name" value="Toxin_20"/>
    <property type="match status" value="1"/>
</dbReference>
<dbReference type="SUPFAM" id="SSF57059">
    <property type="entry name" value="omega toxin-like"/>
    <property type="match status" value="1"/>
</dbReference>
<dbReference type="PROSITE" id="PS60022">
    <property type="entry name" value="HWTX_2"/>
    <property type="match status" value="1"/>
</dbReference>
<accession>P0DL80</accession>
<accession>P49265</accession>
<keyword id="KW-0903">Direct protein sequencing</keyword>
<keyword id="KW-1015">Disulfide bond</keyword>
<keyword id="KW-0528">Neurotoxin</keyword>
<keyword id="KW-0964">Secreted</keyword>
<keyword id="KW-0800">Toxin</keyword>